<reference key="1">
    <citation type="journal article" date="2008" name="PLoS ONE">
        <title>Environmental adaptation: genomic analysis of the piezotolerant and psychrotolerant deep-sea iron reducing bacterium Shewanella piezotolerans WP3.</title>
        <authorList>
            <person name="Wang F."/>
            <person name="Wang J."/>
            <person name="Jian H."/>
            <person name="Zhang B."/>
            <person name="Li S."/>
            <person name="Wang F."/>
            <person name="Zeng X."/>
            <person name="Gao L."/>
            <person name="Bartlett D.H."/>
            <person name="Yu J."/>
            <person name="Hu S."/>
            <person name="Xiao X."/>
        </authorList>
    </citation>
    <scope>NUCLEOTIDE SEQUENCE [LARGE SCALE GENOMIC DNA]</scope>
    <source>
        <strain>WP3 / JCM 13877</strain>
    </source>
</reference>
<proteinExistence type="inferred from homology"/>
<sequence>MELTQHEARVIGVLLEKELTTPEQYPLSLNSLTSGCNQKTSREPVLNLSESEVQNTLDSLAKKRLISEQSGFGSRVVKYKHRFCNTEFSDLQLNPAQLATICLLLLRGPQTPGELRTRSNRLHEFNDVREVEHALDELARRDSPLVALLAKQPGKREARYCQLFTTEELELTTNPILHKDAEPQTSSRAELEDRVSKLEVEVGELKALIQQFQNKSQ</sequence>
<accession>B8CR73</accession>
<gene>
    <name type="ordered locus">swp_3027</name>
</gene>
<dbReference type="EMBL" id="CP000472">
    <property type="protein sequence ID" value="ACJ29745.1"/>
    <property type="molecule type" value="Genomic_DNA"/>
</dbReference>
<dbReference type="RefSeq" id="WP_020913098.1">
    <property type="nucleotide sequence ID" value="NC_011566.1"/>
</dbReference>
<dbReference type="SMR" id="B8CR73"/>
<dbReference type="STRING" id="225849.swp_3027"/>
<dbReference type="KEGG" id="swp:swp_3027"/>
<dbReference type="eggNOG" id="COG3132">
    <property type="taxonomic scope" value="Bacteria"/>
</dbReference>
<dbReference type="HOGENOM" id="CLU_057831_2_0_6"/>
<dbReference type="OrthoDB" id="9784785at2"/>
<dbReference type="Proteomes" id="UP000000753">
    <property type="component" value="Chromosome"/>
</dbReference>
<dbReference type="Gene3D" id="1.10.10.10">
    <property type="entry name" value="Winged helix-like DNA-binding domain superfamily/Winged helix DNA-binding domain"/>
    <property type="match status" value="2"/>
</dbReference>
<dbReference type="HAMAP" id="MF_01584">
    <property type="entry name" value="UPF0502"/>
    <property type="match status" value="1"/>
</dbReference>
<dbReference type="InterPro" id="IPR007432">
    <property type="entry name" value="DUF480"/>
</dbReference>
<dbReference type="InterPro" id="IPR036388">
    <property type="entry name" value="WH-like_DNA-bd_sf"/>
</dbReference>
<dbReference type="InterPro" id="IPR036390">
    <property type="entry name" value="WH_DNA-bd_sf"/>
</dbReference>
<dbReference type="PANTHER" id="PTHR38768">
    <property type="entry name" value="UPF0502 PROTEIN YCEH"/>
    <property type="match status" value="1"/>
</dbReference>
<dbReference type="PANTHER" id="PTHR38768:SF1">
    <property type="entry name" value="UPF0502 PROTEIN YCEH"/>
    <property type="match status" value="1"/>
</dbReference>
<dbReference type="Pfam" id="PF04337">
    <property type="entry name" value="DUF480"/>
    <property type="match status" value="1"/>
</dbReference>
<dbReference type="SUPFAM" id="SSF46785">
    <property type="entry name" value="Winged helix' DNA-binding domain"/>
    <property type="match status" value="2"/>
</dbReference>
<feature type="chain" id="PRO_1000201257" description="UPF0502 protein swp_3027">
    <location>
        <begin position="1"/>
        <end position="217"/>
    </location>
</feature>
<protein>
    <recommendedName>
        <fullName evidence="1">UPF0502 protein swp_3027</fullName>
    </recommendedName>
</protein>
<organism>
    <name type="scientific">Shewanella piezotolerans (strain WP3 / JCM 13877)</name>
    <dbReference type="NCBI Taxonomy" id="225849"/>
    <lineage>
        <taxon>Bacteria</taxon>
        <taxon>Pseudomonadati</taxon>
        <taxon>Pseudomonadota</taxon>
        <taxon>Gammaproteobacteria</taxon>
        <taxon>Alteromonadales</taxon>
        <taxon>Shewanellaceae</taxon>
        <taxon>Shewanella</taxon>
    </lineage>
</organism>
<name>Y3027_SHEPW</name>
<comment type="similarity">
    <text evidence="1">Belongs to the UPF0502 family.</text>
</comment>
<evidence type="ECO:0000255" key="1">
    <source>
        <dbReference type="HAMAP-Rule" id="MF_01584"/>
    </source>
</evidence>